<gene>
    <name type="primary">RpL36</name>
    <name type="synonym">M(1)1B</name>
    <name type="ORF">CG7622</name>
</gene>
<evidence type="ECO:0000250" key="1">
    <source>
        <dbReference type="UniProtKB" id="Q9Y3U8"/>
    </source>
</evidence>
<evidence type="ECO:0000269" key="2">
    <source>
    </source>
</evidence>
<evidence type="ECO:0000305" key="3"/>
<evidence type="ECO:0000305" key="4">
    <source>
    </source>
</evidence>
<name>RL36_DROME</name>
<keyword id="KW-0002">3D-structure</keyword>
<keyword id="KW-0963">Cytoplasm</keyword>
<keyword id="KW-1185">Reference proteome</keyword>
<keyword id="KW-0687">Ribonucleoprotein</keyword>
<keyword id="KW-0689">Ribosomal protein</keyword>
<protein>
    <recommendedName>
        <fullName evidence="3">Large ribosomal subunit protein eL36</fullName>
    </recommendedName>
    <alternativeName>
        <fullName>60S ribosomal protein L36</fullName>
    </alternativeName>
    <alternativeName>
        <fullName>Protein minute(1)1B</fullName>
    </alternativeName>
</protein>
<accession>P49630</accession>
<accession>A2RVC6</accession>
<accession>Q0KHX6</accession>
<accession>Q9W5E5</accession>
<dbReference type="EMBL" id="U20543">
    <property type="protein sequence ID" value="AAA63151.1"/>
    <property type="molecule type" value="Genomic_DNA"/>
</dbReference>
<dbReference type="EMBL" id="AE014298">
    <property type="protein sequence ID" value="AAN09019.1"/>
    <property type="molecule type" value="Genomic_DNA"/>
</dbReference>
<dbReference type="EMBL" id="AE014298">
    <property type="protein sequence ID" value="AAN09020.1"/>
    <property type="molecule type" value="Genomic_DNA"/>
</dbReference>
<dbReference type="EMBL" id="AE014298">
    <property type="protein sequence ID" value="AAN09021.1"/>
    <property type="molecule type" value="Genomic_DNA"/>
</dbReference>
<dbReference type="EMBL" id="AL031581">
    <property type="protein sequence ID" value="CAA20892.1"/>
    <property type="molecule type" value="Genomic_DNA"/>
</dbReference>
<dbReference type="EMBL" id="AY070831">
    <property type="protein sequence ID" value="AAL48453.1"/>
    <property type="molecule type" value="mRNA"/>
</dbReference>
<dbReference type="EMBL" id="BT029917">
    <property type="protein sequence ID" value="ABM92791.1"/>
    <property type="molecule type" value="mRNA"/>
</dbReference>
<dbReference type="PIR" id="T13383">
    <property type="entry name" value="T13383"/>
</dbReference>
<dbReference type="RefSeq" id="NP_001284750.1">
    <property type="nucleotide sequence ID" value="NM_001297821.1"/>
</dbReference>
<dbReference type="RefSeq" id="NP_476629.1">
    <property type="nucleotide sequence ID" value="NM_057281.4"/>
</dbReference>
<dbReference type="RefSeq" id="NP_726686.1">
    <property type="nucleotide sequence ID" value="NM_166853.2"/>
</dbReference>
<dbReference type="RefSeq" id="NP_726687.1">
    <property type="nucleotide sequence ID" value="NM_166854.2"/>
</dbReference>
<dbReference type="RefSeq" id="NP_726688.1">
    <property type="nucleotide sequence ID" value="NM_166855.2"/>
</dbReference>
<dbReference type="PDB" id="4V6W">
    <property type="method" value="EM"/>
    <property type="resolution" value="6.00 A"/>
    <property type="chains" value="Ci=1-115"/>
</dbReference>
<dbReference type="PDB" id="6XU6">
    <property type="method" value="EM"/>
    <property type="resolution" value="3.50 A"/>
    <property type="chains" value="Ci=1-113"/>
</dbReference>
<dbReference type="PDB" id="6XU7">
    <property type="method" value="EM"/>
    <property type="resolution" value="4.90 A"/>
    <property type="chains" value="Ci=1-113"/>
</dbReference>
<dbReference type="PDB" id="6XU8">
    <property type="method" value="EM"/>
    <property type="resolution" value="3.00 A"/>
    <property type="chains" value="Ci=1-113"/>
</dbReference>
<dbReference type="PDBsum" id="4V6W"/>
<dbReference type="PDBsum" id="6XU6"/>
<dbReference type="PDBsum" id="6XU7"/>
<dbReference type="PDBsum" id="6XU8"/>
<dbReference type="EMDB" id="EMD-10622"/>
<dbReference type="EMDB" id="EMD-10623"/>
<dbReference type="EMDB" id="EMD-10624"/>
<dbReference type="SMR" id="P49630"/>
<dbReference type="BioGRID" id="57577">
    <property type="interactions" value="104"/>
</dbReference>
<dbReference type="DIP" id="DIP-21779N"/>
<dbReference type="FunCoup" id="P49630">
    <property type="interactions" value="1073"/>
</dbReference>
<dbReference type="IntAct" id="P49630">
    <property type="interactions" value="10"/>
</dbReference>
<dbReference type="STRING" id="7227.FBpp0070153"/>
<dbReference type="PaxDb" id="7227-FBpp0070150"/>
<dbReference type="DNASU" id="31009"/>
<dbReference type="EnsemblMetazoa" id="FBtr0070155">
    <property type="protein sequence ID" value="FBpp0070150"/>
    <property type="gene ID" value="FBgn0002579"/>
</dbReference>
<dbReference type="EnsemblMetazoa" id="FBtr0070156">
    <property type="protein sequence ID" value="FBpp0070151"/>
    <property type="gene ID" value="FBgn0002579"/>
</dbReference>
<dbReference type="EnsemblMetazoa" id="FBtr0070157">
    <property type="protein sequence ID" value="FBpp0070152"/>
    <property type="gene ID" value="FBgn0002579"/>
</dbReference>
<dbReference type="EnsemblMetazoa" id="FBtr0070158">
    <property type="protein sequence ID" value="FBpp0070153"/>
    <property type="gene ID" value="FBgn0002579"/>
</dbReference>
<dbReference type="EnsemblMetazoa" id="FBtr0345321">
    <property type="protein sequence ID" value="FBpp0311481"/>
    <property type="gene ID" value="FBgn0002579"/>
</dbReference>
<dbReference type="GeneID" id="31009"/>
<dbReference type="KEGG" id="dme:Dmel_CG7622"/>
<dbReference type="AGR" id="FB:FBgn0002579"/>
<dbReference type="CTD" id="25873"/>
<dbReference type="FlyBase" id="FBgn0002579">
    <property type="gene designation" value="RpL36"/>
</dbReference>
<dbReference type="VEuPathDB" id="VectorBase:FBgn0002579"/>
<dbReference type="eggNOG" id="KOG3452">
    <property type="taxonomic scope" value="Eukaryota"/>
</dbReference>
<dbReference type="HOGENOM" id="CLU_140672_0_0_1"/>
<dbReference type="InParanoid" id="P49630"/>
<dbReference type="OMA" id="NKGHKTE"/>
<dbReference type="OrthoDB" id="9616667at2759"/>
<dbReference type="PhylomeDB" id="P49630"/>
<dbReference type="Reactome" id="R-DME-156827">
    <property type="pathway name" value="L13a-mediated translational silencing of Ceruloplasmin expression"/>
</dbReference>
<dbReference type="Reactome" id="R-DME-1799339">
    <property type="pathway name" value="SRP-dependent cotranslational protein targeting to membrane"/>
</dbReference>
<dbReference type="Reactome" id="R-DME-72689">
    <property type="pathway name" value="Formation of a pool of free 40S subunits"/>
</dbReference>
<dbReference type="Reactome" id="R-DME-72706">
    <property type="pathway name" value="GTP hydrolysis and joining of the 60S ribosomal subunit"/>
</dbReference>
<dbReference type="Reactome" id="R-DME-975956">
    <property type="pathway name" value="Nonsense Mediated Decay (NMD) independent of the Exon Junction Complex (EJC)"/>
</dbReference>
<dbReference type="Reactome" id="R-DME-975957">
    <property type="pathway name" value="Nonsense Mediated Decay (NMD) enhanced by the Exon Junction Complex (EJC)"/>
</dbReference>
<dbReference type="SignaLink" id="P49630"/>
<dbReference type="BioGRID-ORCS" id="31009">
    <property type="hits" value="0 hits in 1 CRISPR screen"/>
</dbReference>
<dbReference type="ChiTaRS" id="RpL36">
    <property type="organism name" value="fly"/>
</dbReference>
<dbReference type="GenomeRNAi" id="31009"/>
<dbReference type="PRO" id="PR:P49630"/>
<dbReference type="Proteomes" id="UP000000803">
    <property type="component" value="Chromosome X"/>
</dbReference>
<dbReference type="Bgee" id="FBgn0002579">
    <property type="expression patterns" value="Expressed in eye disc (Drosophila) and 290 other cell types or tissues"/>
</dbReference>
<dbReference type="ExpressionAtlas" id="P49630">
    <property type="expression patterns" value="baseline and differential"/>
</dbReference>
<dbReference type="GO" id="GO:0005737">
    <property type="term" value="C:cytoplasm"/>
    <property type="evidence" value="ECO:0000314"/>
    <property type="project" value="FlyBase"/>
</dbReference>
<dbReference type="GO" id="GO:0022625">
    <property type="term" value="C:cytosolic large ribosomal subunit"/>
    <property type="evidence" value="ECO:0000318"/>
    <property type="project" value="GO_Central"/>
</dbReference>
<dbReference type="GO" id="GO:0022626">
    <property type="term" value="C:cytosolic ribosome"/>
    <property type="evidence" value="ECO:0000314"/>
    <property type="project" value="FlyBase"/>
</dbReference>
<dbReference type="GO" id="GO:0005730">
    <property type="term" value="C:nucleolus"/>
    <property type="evidence" value="ECO:0000314"/>
    <property type="project" value="FlyBase"/>
</dbReference>
<dbReference type="GO" id="GO:0003735">
    <property type="term" value="F:structural constituent of ribosome"/>
    <property type="evidence" value="ECO:0000314"/>
    <property type="project" value="FlyBase"/>
</dbReference>
<dbReference type="GO" id="GO:0002181">
    <property type="term" value="P:cytoplasmic translation"/>
    <property type="evidence" value="ECO:0000318"/>
    <property type="project" value="GO_Central"/>
</dbReference>
<dbReference type="FunFam" id="1.10.10.1760:FF:000004">
    <property type="entry name" value="60S ribosomal protein L36"/>
    <property type="match status" value="1"/>
</dbReference>
<dbReference type="Gene3D" id="1.10.10.1760">
    <property type="entry name" value="60S ribosomal protein L36"/>
    <property type="match status" value="1"/>
</dbReference>
<dbReference type="InterPro" id="IPR000509">
    <property type="entry name" value="Ribosomal_eL36"/>
</dbReference>
<dbReference type="InterPro" id="IPR038097">
    <property type="entry name" value="Ribosomal_eL36_sf"/>
</dbReference>
<dbReference type="PANTHER" id="PTHR10114">
    <property type="entry name" value="60S RIBOSOMAL PROTEIN L36"/>
    <property type="match status" value="1"/>
</dbReference>
<dbReference type="Pfam" id="PF01158">
    <property type="entry name" value="Ribosomal_L36e"/>
    <property type="match status" value="1"/>
</dbReference>
<dbReference type="PROSITE" id="PS01190">
    <property type="entry name" value="RIBOSOMAL_L36E"/>
    <property type="match status" value="1"/>
</dbReference>
<comment type="function">
    <text evidence="2">Component of the large ribosomal subunit.</text>
</comment>
<comment type="subunit">
    <text evidence="2">Component of the large ribosomal subunit.</text>
</comment>
<comment type="subcellular location">
    <subcellularLocation>
        <location evidence="1">Cytoplasm</location>
        <location evidence="1">Cytosol</location>
    </subcellularLocation>
    <subcellularLocation>
        <location evidence="4">Cytoplasm</location>
    </subcellularLocation>
    <text evidence="1">Detected on cytosolic polysomes.</text>
</comment>
<comment type="similarity">
    <text evidence="3">Belongs to the eukaryotic ribosomal protein eL36 family.</text>
</comment>
<sequence length="115" mass="13502">MAVRYELAIGLNKGHKTSKIRNVKYTGDKKVKGLRGSRLKNIQTRHTKFMRDLVREVVGHAPYEKRTMELLKVSKDKRALKFLKRRLGTHIRAKRKREELSNILTQLRKAQTHAK</sequence>
<organism>
    <name type="scientific">Drosophila melanogaster</name>
    <name type="common">Fruit fly</name>
    <dbReference type="NCBI Taxonomy" id="7227"/>
    <lineage>
        <taxon>Eukaryota</taxon>
        <taxon>Metazoa</taxon>
        <taxon>Ecdysozoa</taxon>
        <taxon>Arthropoda</taxon>
        <taxon>Hexapoda</taxon>
        <taxon>Insecta</taxon>
        <taxon>Pterygota</taxon>
        <taxon>Neoptera</taxon>
        <taxon>Endopterygota</taxon>
        <taxon>Diptera</taxon>
        <taxon>Brachycera</taxon>
        <taxon>Muscomorpha</taxon>
        <taxon>Ephydroidea</taxon>
        <taxon>Drosophilidae</taxon>
        <taxon>Drosophila</taxon>
        <taxon>Sophophora</taxon>
    </lineage>
</organism>
<feature type="chain" id="PRO_0000195011" description="Large ribosomal subunit protein eL36">
    <location>
        <begin position="1"/>
        <end position="115"/>
    </location>
</feature>
<proteinExistence type="evidence at protein level"/>
<reference key="1">
    <citation type="submission" date="1995-02" db="EMBL/GenBank/DDBJ databases">
        <title>Sequence of the M(1)1B gene of Drosophila melanogaster.</title>
        <authorList>
            <person name="Steinhauer W.R."/>
        </authorList>
    </citation>
    <scope>NUCLEOTIDE SEQUENCE [GENOMIC DNA]</scope>
    <source>
        <strain>Oregon-R</strain>
    </source>
</reference>
<reference key="2">
    <citation type="journal article" date="2000" name="Science">
        <title>The genome sequence of Drosophila melanogaster.</title>
        <authorList>
            <person name="Adams M.D."/>
            <person name="Celniker S.E."/>
            <person name="Holt R.A."/>
            <person name="Evans C.A."/>
            <person name="Gocayne J.D."/>
            <person name="Amanatides P.G."/>
            <person name="Scherer S.E."/>
            <person name="Li P.W."/>
            <person name="Hoskins R.A."/>
            <person name="Galle R.F."/>
            <person name="George R.A."/>
            <person name="Lewis S.E."/>
            <person name="Richards S."/>
            <person name="Ashburner M."/>
            <person name="Henderson S.N."/>
            <person name="Sutton G.G."/>
            <person name="Wortman J.R."/>
            <person name="Yandell M.D."/>
            <person name="Zhang Q."/>
            <person name="Chen L.X."/>
            <person name="Brandon R.C."/>
            <person name="Rogers Y.-H.C."/>
            <person name="Blazej R.G."/>
            <person name="Champe M."/>
            <person name="Pfeiffer B.D."/>
            <person name="Wan K.H."/>
            <person name="Doyle C."/>
            <person name="Baxter E.G."/>
            <person name="Helt G."/>
            <person name="Nelson C.R."/>
            <person name="Miklos G.L.G."/>
            <person name="Abril J.F."/>
            <person name="Agbayani A."/>
            <person name="An H.-J."/>
            <person name="Andrews-Pfannkoch C."/>
            <person name="Baldwin D."/>
            <person name="Ballew R.M."/>
            <person name="Basu A."/>
            <person name="Baxendale J."/>
            <person name="Bayraktaroglu L."/>
            <person name="Beasley E.M."/>
            <person name="Beeson K.Y."/>
            <person name="Benos P.V."/>
            <person name="Berman B.P."/>
            <person name="Bhandari D."/>
            <person name="Bolshakov S."/>
            <person name="Borkova D."/>
            <person name="Botchan M.R."/>
            <person name="Bouck J."/>
            <person name="Brokstein P."/>
            <person name="Brottier P."/>
            <person name="Burtis K.C."/>
            <person name="Busam D.A."/>
            <person name="Butler H."/>
            <person name="Cadieu E."/>
            <person name="Center A."/>
            <person name="Chandra I."/>
            <person name="Cherry J.M."/>
            <person name="Cawley S."/>
            <person name="Dahlke C."/>
            <person name="Davenport L.B."/>
            <person name="Davies P."/>
            <person name="de Pablos B."/>
            <person name="Delcher A."/>
            <person name="Deng Z."/>
            <person name="Mays A.D."/>
            <person name="Dew I."/>
            <person name="Dietz S.M."/>
            <person name="Dodson K."/>
            <person name="Doup L.E."/>
            <person name="Downes M."/>
            <person name="Dugan-Rocha S."/>
            <person name="Dunkov B.C."/>
            <person name="Dunn P."/>
            <person name="Durbin K.J."/>
            <person name="Evangelista C.C."/>
            <person name="Ferraz C."/>
            <person name="Ferriera S."/>
            <person name="Fleischmann W."/>
            <person name="Fosler C."/>
            <person name="Gabrielian A.E."/>
            <person name="Garg N.S."/>
            <person name="Gelbart W.M."/>
            <person name="Glasser K."/>
            <person name="Glodek A."/>
            <person name="Gong F."/>
            <person name="Gorrell J.H."/>
            <person name="Gu Z."/>
            <person name="Guan P."/>
            <person name="Harris M."/>
            <person name="Harris N.L."/>
            <person name="Harvey D.A."/>
            <person name="Heiman T.J."/>
            <person name="Hernandez J.R."/>
            <person name="Houck J."/>
            <person name="Hostin D."/>
            <person name="Houston K.A."/>
            <person name="Howland T.J."/>
            <person name="Wei M.-H."/>
            <person name="Ibegwam C."/>
            <person name="Jalali M."/>
            <person name="Kalush F."/>
            <person name="Karpen G.H."/>
            <person name="Ke Z."/>
            <person name="Kennison J.A."/>
            <person name="Ketchum K.A."/>
            <person name="Kimmel B.E."/>
            <person name="Kodira C.D."/>
            <person name="Kraft C.L."/>
            <person name="Kravitz S."/>
            <person name="Kulp D."/>
            <person name="Lai Z."/>
            <person name="Lasko P."/>
            <person name="Lei Y."/>
            <person name="Levitsky A.A."/>
            <person name="Li J.H."/>
            <person name="Li Z."/>
            <person name="Liang Y."/>
            <person name="Lin X."/>
            <person name="Liu X."/>
            <person name="Mattei B."/>
            <person name="McIntosh T.C."/>
            <person name="McLeod M.P."/>
            <person name="McPherson D."/>
            <person name="Merkulov G."/>
            <person name="Milshina N.V."/>
            <person name="Mobarry C."/>
            <person name="Morris J."/>
            <person name="Moshrefi A."/>
            <person name="Mount S.M."/>
            <person name="Moy M."/>
            <person name="Murphy B."/>
            <person name="Murphy L."/>
            <person name="Muzny D.M."/>
            <person name="Nelson D.L."/>
            <person name="Nelson D.R."/>
            <person name="Nelson K.A."/>
            <person name="Nixon K."/>
            <person name="Nusskern D.R."/>
            <person name="Pacleb J.M."/>
            <person name="Palazzolo M."/>
            <person name="Pittman G.S."/>
            <person name="Pan S."/>
            <person name="Pollard J."/>
            <person name="Puri V."/>
            <person name="Reese M.G."/>
            <person name="Reinert K."/>
            <person name="Remington K."/>
            <person name="Saunders R.D.C."/>
            <person name="Scheeler F."/>
            <person name="Shen H."/>
            <person name="Shue B.C."/>
            <person name="Siden-Kiamos I."/>
            <person name="Simpson M."/>
            <person name="Skupski M.P."/>
            <person name="Smith T.J."/>
            <person name="Spier E."/>
            <person name="Spradling A.C."/>
            <person name="Stapleton M."/>
            <person name="Strong R."/>
            <person name="Sun E."/>
            <person name="Svirskas R."/>
            <person name="Tector C."/>
            <person name="Turner R."/>
            <person name="Venter E."/>
            <person name="Wang A.H."/>
            <person name="Wang X."/>
            <person name="Wang Z.-Y."/>
            <person name="Wassarman D.A."/>
            <person name="Weinstock G.M."/>
            <person name="Weissenbach J."/>
            <person name="Williams S.M."/>
            <person name="Woodage T."/>
            <person name="Worley K.C."/>
            <person name="Wu D."/>
            <person name="Yang S."/>
            <person name="Yao Q.A."/>
            <person name="Ye J."/>
            <person name="Yeh R.-F."/>
            <person name="Zaveri J.S."/>
            <person name="Zhan M."/>
            <person name="Zhang G."/>
            <person name="Zhao Q."/>
            <person name="Zheng L."/>
            <person name="Zheng X.H."/>
            <person name="Zhong F.N."/>
            <person name="Zhong W."/>
            <person name="Zhou X."/>
            <person name="Zhu S.C."/>
            <person name="Zhu X."/>
            <person name="Smith H.O."/>
            <person name="Gibbs R.A."/>
            <person name="Myers E.W."/>
            <person name="Rubin G.M."/>
            <person name="Venter J.C."/>
        </authorList>
    </citation>
    <scope>NUCLEOTIDE SEQUENCE [LARGE SCALE GENOMIC DNA]</scope>
    <source>
        <strain>Berkeley</strain>
    </source>
</reference>
<reference key="3">
    <citation type="journal article" date="2002" name="Genome Biol.">
        <title>Annotation of the Drosophila melanogaster euchromatic genome: a systematic review.</title>
        <authorList>
            <person name="Misra S."/>
            <person name="Crosby M.A."/>
            <person name="Mungall C.J."/>
            <person name="Matthews B.B."/>
            <person name="Campbell K.S."/>
            <person name="Hradecky P."/>
            <person name="Huang Y."/>
            <person name="Kaminker J.S."/>
            <person name="Millburn G.H."/>
            <person name="Prochnik S.E."/>
            <person name="Smith C.D."/>
            <person name="Tupy J.L."/>
            <person name="Whitfield E.J."/>
            <person name="Bayraktaroglu L."/>
            <person name="Berman B.P."/>
            <person name="Bettencourt B.R."/>
            <person name="Celniker S.E."/>
            <person name="de Grey A.D.N.J."/>
            <person name="Drysdale R.A."/>
            <person name="Harris N.L."/>
            <person name="Richter J."/>
            <person name="Russo S."/>
            <person name="Schroeder A.J."/>
            <person name="Shu S.Q."/>
            <person name="Stapleton M."/>
            <person name="Yamada C."/>
            <person name="Ashburner M."/>
            <person name="Gelbart W.M."/>
            <person name="Rubin G.M."/>
            <person name="Lewis S.E."/>
        </authorList>
    </citation>
    <scope>GENOME REANNOTATION</scope>
    <source>
        <strain>Berkeley</strain>
    </source>
</reference>
<reference key="4">
    <citation type="journal article" date="2000" name="Science">
        <title>From sequence to chromosome: the tip of the X chromosome of D. melanogaster.</title>
        <authorList>
            <person name="Benos P.V."/>
            <person name="Gatt M.K."/>
            <person name="Ashburner M."/>
            <person name="Murphy L."/>
            <person name="Harris D."/>
            <person name="Barrell B.G."/>
            <person name="Ferraz C."/>
            <person name="Vidal S."/>
            <person name="Brun C."/>
            <person name="Demailles J."/>
            <person name="Cadieu E."/>
            <person name="Dreano S."/>
            <person name="Gloux S."/>
            <person name="Lelaure V."/>
            <person name="Mottier S."/>
            <person name="Galibert F."/>
            <person name="Borkova D."/>
            <person name="Minana B."/>
            <person name="Kafatos F.C."/>
            <person name="Louis C."/>
            <person name="Siden-Kiamos I."/>
            <person name="Bolshakov S."/>
            <person name="Papagiannakis G."/>
            <person name="Spanos L."/>
            <person name="Cox S."/>
            <person name="Madueno E."/>
            <person name="de Pablos B."/>
            <person name="Modolell J."/>
            <person name="Peter A."/>
            <person name="Schoettler P."/>
            <person name="Werner M."/>
            <person name="Mourkioti F."/>
            <person name="Beinert N."/>
            <person name="Dowe G."/>
            <person name="Schaefer U."/>
            <person name="Jaeckle H."/>
            <person name="Bucheton A."/>
            <person name="Callister D.M."/>
            <person name="Campbell L.A."/>
            <person name="Darlamitsou A."/>
            <person name="Henderson N.S."/>
            <person name="McMillan P.J."/>
            <person name="Salles C."/>
            <person name="Tait E.A."/>
            <person name="Valenti P."/>
            <person name="Saunders R.D.C."/>
            <person name="Glover D.M."/>
        </authorList>
    </citation>
    <scope>NUCLEOTIDE SEQUENCE [LARGE SCALE GENOMIC DNA]</scope>
    <source>
        <strain>Oregon-R</strain>
    </source>
</reference>
<reference key="5">
    <citation type="journal article" date="2002" name="Genome Biol.">
        <title>A Drosophila full-length cDNA resource.</title>
        <authorList>
            <person name="Stapleton M."/>
            <person name="Carlson J.W."/>
            <person name="Brokstein P."/>
            <person name="Yu C."/>
            <person name="Champe M."/>
            <person name="George R.A."/>
            <person name="Guarin H."/>
            <person name="Kronmiller B."/>
            <person name="Pacleb J.M."/>
            <person name="Park S."/>
            <person name="Wan K.H."/>
            <person name="Rubin G.M."/>
            <person name="Celniker S.E."/>
        </authorList>
    </citation>
    <scope>NUCLEOTIDE SEQUENCE [LARGE SCALE MRNA]</scope>
    <source>
        <strain>Berkeley</strain>
        <tissue>Testis</tissue>
    </source>
</reference>
<reference key="6">
    <citation type="submission" date="2007-01" db="EMBL/GenBank/DDBJ databases">
        <authorList>
            <person name="Stapleton M."/>
            <person name="Carlson J.W."/>
            <person name="Frise E."/>
            <person name="Kapadia B."/>
            <person name="Park S."/>
            <person name="Wan K.H."/>
            <person name="Yu C."/>
            <person name="Celniker S.E."/>
        </authorList>
    </citation>
    <scope>NUCLEOTIDE SEQUENCE [LARGE SCALE MRNA]</scope>
    <source>
        <strain>Berkeley</strain>
        <tissue>Head</tissue>
    </source>
</reference>
<reference key="7">
    <citation type="journal article" date="2013" name="Nature">
        <title>Structures of the human and Drosophila 80S ribosome.</title>
        <authorList>
            <person name="Anger A.M."/>
            <person name="Armache J.P."/>
            <person name="Berninghausen O."/>
            <person name="Habeck M."/>
            <person name="Subklewe M."/>
            <person name="Wilson D.N."/>
            <person name="Beckmann R."/>
        </authorList>
    </citation>
    <scope>STRUCTURE BY ELECTRON MICROSCOPY (6.0 ANGSTROMS) OF THE 80S RIBOSOME</scope>
</reference>